<organism>
    <name type="scientific">Streptococcus pneumoniae (strain Taiwan19F-14)</name>
    <dbReference type="NCBI Taxonomy" id="487213"/>
    <lineage>
        <taxon>Bacteria</taxon>
        <taxon>Bacillati</taxon>
        <taxon>Bacillota</taxon>
        <taxon>Bacilli</taxon>
        <taxon>Lactobacillales</taxon>
        <taxon>Streptococcaceae</taxon>
        <taxon>Streptococcus</taxon>
    </lineage>
</organism>
<comment type="function">
    <text evidence="1">Forms part of the ribosomal stalk, playing a central role in the interaction of the ribosome with GTP-bound translation factors.</text>
</comment>
<comment type="subunit">
    <text evidence="1">Part of the ribosomal stalk of the 50S ribosomal subunit. The N-terminus interacts with L11 and the large rRNA to form the base of the stalk. The C-terminus forms an elongated spine to which L12 dimers bind in a sequential fashion forming a multimeric L10(L12)X complex.</text>
</comment>
<comment type="similarity">
    <text evidence="1">Belongs to the universal ribosomal protein uL10 family.</text>
</comment>
<gene>
    <name evidence="1" type="primary">rplJ</name>
    <name type="ordered locus">SPT_0920</name>
</gene>
<accession>C1CR00</accession>
<name>RL10_STRZT</name>
<evidence type="ECO:0000255" key="1">
    <source>
        <dbReference type="HAMAP-Rule" id="MF_00362"/>
    </source>
</evidence>
<evidence type="ECO:0000305" key="2"/>
<dbReference type="EMBL" id="CP000921">
    <property type="protein sequence ID" value="ACO23176.1"/>
    <property type="molecule type" value="Genomic_DNA"/>
</dbReference>
<dbReference type="RefSeq" id="WP_001287278.1">
    <property type="nucleotide sequence ID" value="NC_012469.1"/>
</dbReference>
<dbReference type="SMR" id="C1CR00"/>
<dbReference type="GeneID" id="45653385"/>
<dbReference type="KEGG" id="snt:SPT_0920"/>
<dbReference type="HOGENOM" id="CLU_092227_2_0_9"/>
<dbReference type="GO" id="GO:0015934">
    <property type="term" value="C:large ribosomal subunit"/>
    <property type="evidence" value="ECO:0007669"/>
    <property type="project" value="InterPro"/>
</dbReference>
<dbReference type="GO" id="GO:0070180">
    <property type="term" value="F:large ribosomal subunit rRNA binding"/>
    <property type="evidence" value="ECO:0007669"/>
    <property type="project" value="UniProtKB-UniRule"/>
</dbReference>
<dbReference type="GO" id="GO:0003735">
    <property type="term" value="F:structural constituent of ribosome"/>
    <property type="evidence" value="ECO:0007669"/>
    <property type="project" value="InterPro"/>
</dbReference>
<dbReference type="GO" id="GO:0006412">
    <property type="term" value="P:translation"/>
    <property type="evidence" value="ECO:0007669"/>
    <property type="project" value="UniProtKB-UniRule"/>
</dbReference>
<dbReference type="CDD" id="cd05797">
    <property type="entry name" value="Ribosomal_L10"/>
    <property type="match status" value="1"/>
</dbReference>
<dbReference type="FunFam" id="3.30.70.1730:FF:000001">
    <property type="entry name" value="50S ribosomal protein L10"/>
    <property type="match status" value="1"/>
</dbReference>
<dbReference type="Gene3D" id="3.30.70.1730">
    <property type="match status" value="1"/>
</dbReference>
<dbReference type="HAMAP" id="MF_00362">
    <property type="entry name" value="Ribosomal_uL10"/>
    <property type="match status" value="1"/>
</dbReference>
<dbReference type="InterPro" id="IPR001790">
    <property type="entry name" value="Ribosomal_uL10"/>
</dbReference>
<dbReference type="InterPro" id="IPR043141">
    <property type="entry name" value="Ribosomal_uL10-like_sf"/>
</dbReference>
<dbReference type="InterPro" id="IPR022973">
    <property type="entry name" value="Ribosomal_uL10_bac"/>
</dbReference>
<dbReference type="InterPro" id="IPR047865">
    <property type="entry name" value="Ribosomal_uL10_bac_type"/>
</dbReference>
<dbReference type="InterPro" id="IPR002363">
    <property type="entry name" value="Ribosomal_uL10_CS_bac"/>
</dbReference>
<dbReference type="NCBIfam" id="NF000955">
    <property type="entry name" value="PRK00099.1-1"/>
    <property type="match status" value="1"/>
</dbReference>
<dbReference type="PANTHER" id="PTHR11560">
    <property type="entry name" value="39S RIBOSOMAL PROTEIN L10, MITOCHONDRIAL"/>
    <property type="match status" value="1"/>
</dbReference>
<dbReference type="Pfam" id="PF00466">
    <property type="entry name" value="Ribosomal_L10"/>
    <property type="match status" value="1"/>
</dbReference>
<dbReference type="SUPFAM" id="SSF160369">
    <property type="entry name" value="Ribosomal protein L10-like"/>
    <property type="match status" value="1"/>
</dbReference>
<dbReference type="PROSITE" id="PS01109">
    <property type="entry name" value="RIBOSOMAL_L10"/>
    <property type="match status" value="1"/>
</dbReference>
<keyword id="KW-0687">Ribonucleoprotein</keyword>
<keyword id="KW-0689">Ribosomal protein</keyword>
<keyword id="KW-0694">RNA-binding</keyword>
<keyword id="KW-0699">rRNA-binding</keyword>
<proteinExistence type="inferred from homology"/>
<reference key="1">
    <citation type="journal article" date="2010" name="Genome Biol.">
        <title>Structure and dynamics of the pan-genome of Streptococcus pneumoniae and closely related species.</title>
        <authorList>
            <person name="Donati C."/>
            <person name="Hiller N.L."/>
            <person name="Tettelin H."/>
            <person name="Muzzi A."/>
            <person name="Croucher N.J."/>
            <person name="Angiuoli S.V."/>
            <person name="Oggioni M."/>
            <person name="Dunning Hotopp J.C."/>
            <person name="Hu F.Z."/>
            <person name="Riley D.R."/>
            <person name="Covacci A."/>
            <person name="Mitchell T.J."/>
            <person name="Bentley S.D."/>
            <person name="Kilian M."/>
            <person name="Ehrlich G.D."/>
            <person name="Rappuoli R."/>
            <person name="Moxon E.R."/>
            <person name="Masignani V."/>
        </authorList>
    </citation>
    <scope>NUCLEOTIDE SEQUENCE [LARGE SCALE GENOMIC DNA]</scope>
    <source>
        <strain>Taiwan19F-14</strain>
    </source>
</reference>
<protein>
    <recommendedName>
        <fullName evidence="1">Large ribosomal subunit protein uL10</fullName>
    </recommendedName>
    <alternativeName>
        <fullName evidence="2">50S ribosomal protein L10</fullName>
    </alternativeName>
</protein>
<feature type="chain" id="PRO_1000195570" description="Large ribosomal subunit protein uL10">
    <location>
        <begin position="1"/>
        <end position="166"/>
    </location>
</feature>
<sequence length="166" mass="17479">MSEAIIAKKAELVDVVAEKMKAAASIVVVDARGLTVEQDTVLRRELRGSEVEYKVIKNSILRRAAEKAGLEDLASVFVGPSAVAFSNEDVIAPAKILNDFSKNAEALEIKGGAIEGAVASKEEILALATLPNREGLLSMLLSVLQAPVRNVALAVKAVAESKEDAA</sequence>